<name>SYDND_PSEPG</name>
<dbReference type="EC" id="6.1.1.23" evidence="1"/>
<dbReference type="EMBL" id="CP000926">
    <property type="protein sequence ID" value="ABZ00094.1"/>
    <property type="molecule type" value="Genomic_DNA"/>
</dbReference>
<dbReference type="RefSeq" id="WP_012273771.1">
    <property type="nucleotide sequence ID" value="NC_010322.1"/>
</dbReference>
<dbReference type="SMR" id="B0KTJ6"/>
<dbReference type="KEGG" id="ppg:PputGB1_4205"/>
<dbReference type="eggNOG" id="COG0173">
    <property type="taxonomic scope" value="Bacteria"/>
</dbReference>
<dbReference type="HOGENOM" id="CLU_014330_3_2_6"/>
<dbReference type="Proteomes" id="UP000002157">
    <property type="component" value="Chromosome"/>
</dbReference>
<dbReference type="GO" id="GO:0005737">
    <property type="term" value="C:cytoplasm"/>
    <property type="evidence" value="ECO:0007669"/>
    <property type="project" value="UniProtKB-SubCell"/>
</dbReference>
<dbReference type="GO" id="GO:0004815">
    <property type="term" value="F:aspartate-tRNA ligase activity"/>
    <property type="evidence" value="ECO:0007669"/>
    <property type="project" value="UniProtKB-UniRule"/>
</dbReference>
<dbReference type="GO" id="GO:0050560">
    <property type="term" value="F:aspartate-tRNA(Asn) ligase activity"/>
    <property type="evidence" value="ECO:0007669"/>
    <property type="project" value="UniProtKB-EC"/>
</dbReference>
<dbReference type="GO" id="GO:0005524">
    <property type="term" value="F:ATP binding"/>
    <property type="evidence" value="ECO:0007669"/>
    <property type="project" value="UniProtKB-UniRule"/>
</dbReference>
<dbReference type="GO" id="GO:0003676">
    <property type="term" value="F:nucleic acid binding"/>
    <property type="evidence" value="ECO:0007669"/>
    <property type="project" value="InterPro"/>
</dbReference>
<dbReference type="GO" id="GO:0006422">
    <property type="term" value="P:aspartyl-tRNA aminoacylation"/>
    <property type="evidence" value="ECO:0007669"/>
    <property type="project" value="UniProtKB-UniRule"/>
</dbReference>
<dbReference type="CDD" id="cd00777">
    <property type="entry name" value="AspRS_core"/>
    <property type="match status" value="1"/>
</dbReference>
<dbReference type="CDD" id="cd04317">
    <property type="entry name" value="EcAspRS_like_N"/>
    <property type="match status" value="1"/>
</dbReference>
<dbReference type="Gene3D" id="3.30.930.10">
    <property type="entry name" value="Bira Bifunctional Protein, Domain 2"/>
    <property type="match status" value="1"/>
</dbReference>
<dbReference type="Gene3D" id="3.30.1360.30">
    <property type="entry name" value="GAD-like domain"/>
    <property type="match status" value="1"/>
</dbReference>
<dbReference type="Gene3D" id="2.40.50.140">
    <property type="entry name" value="Nucleic acid-binding proteins"/>
    <property type="match status" value="1"/>
</dbReference>
<dbReference type="HAMAP" id="MF_00044">
    <property type="entry name" value="Asp_tRNA_synth_type1"/>
    <property type="match status" value="1"/>
</dbReference>
<dbReference type="InterPro" id="IPR004364">
    <property type="entry name" value="Aa-tRNA-synt_II"/>
</dbReference>
<dbReference type="InterPro" id="IPR006195">
    <property type="entry name" value="aa-tRNA-synth_II"/>
</dbReference>
<dbReference type="InterPro" id="IPR045864">
    <property type="entry name" value="aa-tRNA-synth_II/BPL/LPL"/>
</dbReference>
<dbReference type="InterPro" id="IPR004524">
    <property type="entry name" value="Asp-tRNA-ligase_1"/>
</dbReference>
<dbReference type="InterPro" id="IPR047089">
    <property type="entry name" value="Asp-tRNA-ligase_1_N"/>
</dbReference>
<dbReference type="InterPro" id="IPR002312">
    <property type="entry name" value="Asp/Asn-tRNA-synth_IIb"/>
</dbReference>
<dbReference type="InterPro" id="IPR047090">
    <property type="entry name" value="AspRS_core"/>
</dbReference>
<dbReference type="InterPro" id="IPR004115">
    <property type="entry name" value="GAD-like_sf"/>
</dbReference>
<dbReference type="InterPro" id="IPR029351">
    <property type="entry name" value="GAD_dom"/>
</dbReference>
<dbReference type="InterPro" id="IPR012340">
    <property type="entry name" value="NA-bd_OB-fold"/>
</dbReference>
<dbReference type="InterPro" id="IPR004365">
    <property type="entry name" value="NA-bd_OB_tRNA"/>
</dbReference>
<dbReference type="NCBIfam" id="TIGR00459">
    <property type="entry name" value="aspS_bact"/>
    <property type="match status" value="1"/>
</dbReference>
<dbReference type="NCBIfam" id="NF001750">
    <property type="entry name" value="PRK00476.1"/>
    <property type="match status" value="1"/>
</dbReference>
<dbReference type="PANTHER" id="PTHR22594:SF5">
    <property type="entry name" value="ASPARTATE--TRNA LIGASE, MITOCHONDRIAL"/>
    <property type="match status" value="1"/>
</dbReference>
<dbReference type="PANTHER" id="PTHR22594">
    <property type="entry name" value="ASPARTYL/LYSYL-TRNA SYNTHETASE"/>
    <property type="match status" value="1"/>
</dbReference>
<dbReference type="Pfam" id="PF02938">
    <property type="entry name" value="GAD"/>
    <property type="match status" value="1"/>
</dbReference>
<dbReference type="Pfam" id="PF00152">
    <property type="entry name" value="tRNA-synt_2"/>
    <property type="match status" value="1"/>
</dbReference>
<dbReference type="Pfam" id="PF01336">
    <property type="entry name" value="tRNA_anti-codon"/>
    <property type="match status" value="1"/>
</dbReference>
<dbReference type="PRINTS" id="PR01042">
    <property type="entry name" value="TRNASYNTHASP"/>
</dbReference>
<dbReference type="SUPFAM" id="SSF55681">
    <property type="entry name" value="Class II aaRS and biotin synthetases"/>
    <property type="match status" value="1"/>
</dbReference>
<dbReference type="SUPFAM" id="SSF55261">
    <property type="entry name" value="GAD domain-like"/>
    <property type="match status" value="1"/>
</dbReference>
<dbReference type="SUPFAM" id="SSF50249">
    <property type="entry name" value="Nucleic acid-binding proteins"/>
    <property type="match status" value="1"/>
</dbReference>
<dbReference type="PROSITE" id="PS50862">
    <property type="entry name" value="AA_TRNA_LIGASE_II"/>
    <property type="match status" value="1"/>
</dbReference>
<proteinExistence type="inferred from homology"/>
<feature type="chain" id="PRO_1000074714" description="Aspartate--tRNA(Asp/Asn) ligase">
    <location>
        <begin position="1"/>
        <end position="591"/>
    </location>
</feature>
<feature type="region of interest" description="Aspartate" evidence="1">
    <location>
        <begin position="198"/>
        <end position="201"/>
    </location>
</feature>
<feature type="binding site" evidence="1">
    <location>
        <position position="174"/>
    </location>
    <ligand>
        <name>L-aspartate</name>
        <dbReference type="ChEBI" id="CHEBI:29991"/>
    </ligand>
</feature>
<feature type="binding site" evidence="1">
    <location>
        <begin position="220"/>
        <end position="222"/>
    </location>
    <ligand>
        <name>ATP</name>
        <dbReference type="ChEBI" id="CHEBI:30616"/>
    </ligand>
</feature>
<feature type="binding site" evidence="1">
    <location>
        <position position="220"/>
    </location>
    <ligand>
        <name>L-aspartate</name>
        <dbReference type="ChEBI" id="CHEBI:29991"/>
    </ligand>
</feature>
<feature type="binding site" evidence="1">
    <location>
        <position position="229"/>
    </location>
    <ligand>
        <name>ATP</name>
        <dbReference type="ChEBI" id="CHEBI:30616"/>
    </ligand>
</feature>
<feature type="binding site" evidence="1">
    <location>
        <position position="450"/>
    </location>
    <ligand>
        <name>L-aspartate</name>
        <dbReference type="ChEBI" id="CHEBI:29991"/>
    </ligand>
</feature>
<feature type="binding site" evidence="1">
    <location>
        <position position="483"/>
    </location>
    <ligand>
        <name>ATP</name>
        <dbReference type="ChEBI" id="CHEBI:30616"/>
    </ligand>
</feature>
<feature type="binding site" evidence="1">
    <location>
        <position position="490"/>
    </location>
    <ligand>
        <name>L-aspartate</name>
        <dbReference type="ChEBI" id="CHEBI:29991"/>
    </ligand>
</feature>
<feature type="binding site" evidence="1">
    <location>
        <begin position="535"/>
        <end position="538"/>
    </location>
    <ligand>
        <name>ATP</name>
        <dbReference type="ChEBI" id="CHEBI:30616"/>
    </ligand>
</feature>
<feature type="site" description="Important for tRNA non-discrimination" evidence="1">
    <location>
        <position position="31"/>
    </location>
</feature>
<feature type="site" description="Important for tRNA non-discrimination" evidence="1">
    <location>
        <position position="82"/>
    </location>
</feature>
<gene>
    <name evidence="1" type="primary">aspS</name>
    <name type="ordered locus">PputGB1_4205</name>
</gene>
<accession>B0KTJ6</accession>
<evidence type="ECO:0000255" key="1">
    <source>
        <dbReference type="HAMAP-Rule" id="MF_00044"/>
    </source>
</evidence>
<sequence length="591" mass="66537">MMRSHYCGQLNESLDGQEVTLCGWVHRRRDHGGVIFLDIRDREGMAQVVFDPDRAETFAAADRVRSEYVVQITGKVRKRPDGAVNANMASGAIEILGYQLNVLNEAETPPFPLNEYSDVGEETRLRYRFIDLRRPEMADKLRLRSRITSSIRRFLDENGFLDVETPILTRATPEGARDYLVPSRTHAGSFFALPQSPQLFKQLLMVAGFDRYYQIAKCFRDEDLRADRQPEFTQIDIETSFLDESEIMGLTESMIRKLFKEVLDLEFGEFPHMTFEEAMRRYGSDKPDLRNPLELVDVADQLKDVDFKVFAGPANDPKCRVTALRLPGGASMPRSKIDEYTKFVGIYGAKGLAYIKVNERAKGVEGLQSPIVKNIPEANLNNILDRVGAVDGDIVFFGADKFKVVSEALGALRIRLGHDFELLTCEWAPMWVVDFPMFEENEDGSFTALHHPFTAPKCTPEELEANPATALSRAYDMVLNGTELGGGSIRIHRKEMQQAVFRLLGIEAEEQEEKFGFLLDALKFGAPPHGGLAFGLDRLVMLMTGAQSIREVIAFPKTQSAACVMTQAPGLVDAKALRELHIRLREQTKVE</sequence>
<keyword id="KW-0030">Aminoacyl-tRNA synthetase</keyword>
<keyword id="KW-0067">ATP-binding</keyword>
<keyword id="KW-0963">Cytoplasm</keyword>
<keyword id="KW-0436">Ligase</keyword>
<keyword id="KW-0547">Nucleotide-binding</keyword>
<keyword id="KW-0648">Protein biosynthesis</keyword>
<organism>
    <name type="scientific">Pseudomonas putida (strain GB-1)</name>
    <dbReference type="NCBI Taxonomy" id="76869"/>
    <lineage>
        <taxon>Bacteria</taxon>
        <taxon>Pseudomonadati</taxon>
        <taxon>Pseudomonadota</taxon>
        <taxon>Gammaproteobacteria</taxon>
        <taxon>Pseudomonadales</taxon>
        <taxon>Pseudomonadaceae</taxon>
        <taxon>Pseudomonas</taxon>
    </lineage>
</organism>
<protein>
    <recommendedName>
        <fullName evidence="1">Aspartate--tRNA(Asp/Asn) ligase</fullName>
        <ecNumber evidence="1">6.1.1.23</ecNumber>
    </recommendedName>
    <alternativeName>
        <fullName evidence="1">Aspartyl-tRNA synthetase</fullName>
        <shortName evidence="1">AspRS</shortName>
    </alternativeName>
    <alternativeName>
        <fullName evidence="1">Non-discriminating aspartyl-tRNA synthetase</fullName>
        <shortName evidence="1">ND-AspRS</shortName>
    </alternativeName>
</protein>
<reference key="1">
    <citation type="submission" date="2008-01" db="EMBL/GenBank/DDBJ databases">
        <title>Complete sequence of Pseudomonas putida GB-1.</title>
        <authorList>
            <consortium name="US DOE Joint Genome Institute"/>
            <person name="Copeland A."/>
            <person name="Lucas S."/>
            <person name="Lapidus A."/>
            <person name="Barry K."/>
            <person name="Glavina del Rio T."/>
            <person name="Dalin E."/>
            <person name="Tice H."/>
            <person name="Pitluck S."/>
            <person name="Bruce D."/>
            <person name="Goodwin L."/>
            <person name="Chertkov O."/>
            <person name="Brettin T."/>
            <person name="Detter J.C."/>
            <person name="Han C."/>
            <person name="Kuske C.R."/>
            <person name="Schmutz J."/>
            <person name="Larimer F."/>
            <person name="Land M."/>
            <person name="Hauser L."/>
            <person name="Kyrpides N."/>
            <person name="Kim E."/>
            <person name="McCarthy J.K."/>
            <person name="Richardson P."/>
        </authorList>
    </citation>
    <scope>NUCLEOTIDE SEQUENCE [LARGE SCALE GENOMIC DNA]</scope>
    <source>
        <strain>GB-1</strain>
    </source>
</reference>
<comment type="function">
    <text evidence="1">Aspartyl-tRNA synthetase with relaxed tRNA specificity since it is able to aspartylate not only its cognate tRNA(Asp) but also tRNA(Asn). Reaction proceeds in two steps: L-aspartate is first activated by ATP to form Asp-AMP and then transferred to the acceptor end of tRNA(Asp/Asn).</text>
</comment>
<comment type="catalytic activity">
    <reaction evidence="1">
        <text>tRNA(Asx) + L-aspartate + ATP = L-aspartyl-tRNA(Asx) + AMP + diphosphate</text>
        <dbReference type="Rhea" id="RHEA:18349"/>
        <dbReference type="Rhea" id="RHEA-COMP:9710"/>
        <dbReference type="Rhea" id="RHEA-COMP:9711"/>
        <dbReference type="ChEBI" id="CHEBI:29991"/>
        <dbReference type="ChEBI" id="CHEBI:30616"/>
        <dbReference type="ChEBI" id="CHEBI:33019"/>
        <dbReference type="ChEBI" id="CHEBI:78442"/>
        <dbReference type="ChEBI" id="CHEBI:78516"/>
        <dbReference type="ChEBI" id="CHEBI:456215"/>
        <dbReference type="EC" id="6.1.1.23"/>
    </reaction>
</comment>
<comment type="subunit">
    <text evidence="1">Homodimer.</text>
</comment>
<comment type="subcellular location">
    <subcellularLocation>
        <location evidence="1">Cytoplasm</location>
    </subcellularLocation>
</comment>
<comment type="similarity">
    <text evidence="1">Belongs to the class-II aminoacyl-tRNA synthetase family. Type 1 subfamily.</text>
</comment>